<name>SYR_XANAC</name>
<reference key="1">
    <citation type="journal article" date="2002" name="Nature">
        <title>Comparison of the genomes of two Xanthomonas pathogens with differing host specificities.</title>
        <authorList>
            <person name="da Silva A.C.R."/>
            <person name="Ferro J.A."/>
            <person name="Reinach F.C."/>
            <person name="Farah C.S."/>
            <person name="Furlan L.R."/>
            <person name="Quaggio R.B."/>
            <person name="Monteiro-Vitorello C.B."/>
            <person name="Van Sluys M.A."/>
            <person name="Almeida N.F. Jr."/>
            <person name="Alves L.M.C."/>
            <person name="do Amaral A.M."/>
            <person name="Bertolini M.C."/>
            <person name="Camargo L.E.A."/>
            <person name="Camarotte G."/>
            <person name="Cannavan F."/>
            <person name="Cardozo J."/>
            <person name="Chambergo F."/>
            <person name="Ciapina L.P."/>
            <person name="Cicarelli R.M.B."/>
            <person name="Coutinho L.L."/>
            <person name="Cursino-Santos J.R."/>
            <person name="El-Dorry H."/>
            <person name="Faria J.B."/>
            <person name="Ferreira A.J.S."/>
            <person name="Ferreira R.C.C."/>
            <person name="Ferro M.I.T."/>
            <person name="Formighieri E.F."/>
            <person name="Franco M.C."/>
            <person name="Greggio C.C."/>
            <person name="Gruber A."/>
            <person name="Katsuyama A.M."/>
            <person name="Kishi L.T."/>
            <person name="Leite R.P."/>
            <person name="Lemos E.G.M."/>
            <person name="Lemos M.V.F."/>
            <person name="Locali E.C."/>
            <person name="Machado M.A."/>
            <person name="Madeira A.M.B.N."/>
            <person name="Martinez-Rossi N.M."/>
            <person name="Martins E.C."/>
            <person name="Meidanis J."/>
            <person name="Menck C.F.M."/>
            <person name="Miyaki C.Y."/>
            <person name="Moon D.H."/>
            <person name="Moreira L.M."/>
            <person name="Novo M.T.M."/>
            <person name="Okura V.K."/>
            <person name="Oliveira M.C."/>
            <person name="Oliveira V.R."/>
            <person name="Pereira H.A."/>
            <person name="Rossi A."/>
            <person name="Sena J.A.D."/>
            <person name="Silva C."/>
            <person name="de Souza R.F."/>
            <person name="Spinola L.A.F."/>
            <person name="Takita M.A."/>
            <person name="Tamura R.E."/>
            <person name="Teixeira E.C."/>
            <person name="Tezza R.I.D."/>
            <person name="Trindade dos Santos M."/>
            <person name="Truffi D."/>
            <person name="Tsai S.M."/>
            <person name="White F.F."/>
            <person name="Setubal J.C."/>
            <person name="Kitajima J.P."/>
        </authorList>
    </citation>
    <scope>NUCLEOTIDE SEQUENCE [LARGE SCALE GENOMIC DNA]</scope>
    <source>
        <strain>306</strain>
    </source>
</reference>
<accession>Q8PFR2</accession>
<keyword id="KW-0030">Aminoacyl-tRNA synthetase</keyword>
<keyword id="KW-0067">ATP-binding</keyword>
<keyword id="KW-0963">Cytoplasm</keyword>
<keyword id="KW-0436">Ligase</keyword>
<keyword id="KW-0547">Nucleotide-binding</keyword>
<keyword id="KW-0648">Protein biosynthesis</keyword>
<comment type="catalytic activity">
    <reaction evidence="1">
        <text>tRNA(Arg) + L-arginine + ATP = L-arginyl-tRNA(Arg) + AMP + diphosphate</text>
        <dbReference type="Rhea" id="RHEA:20301"/>
        <dbReference type="Rhea" id="RHEA-COMP:9658"/>
        <dbReference type="Rhea" id="RHEA-COMP:9673"/>
        <dbReference type="ChEBI" id="CHEBI:30616"/>
        <dbReference type="ChEBI" id="CHEBI:32682"/>
        <dbReference type="ChEBI" id="CHEBI:33019"/>
        <dbReference type="ChEBI" id="CHEBI:78442"/>
        <dbReference type="ChEBI" id="CHEBI:78513"/>
        <dbReference type="ChEBI" id="CHEBI:456215"/>
        <dbReference type="EC" id="6.1.1.19"/>
    </reaction>
</comment>
<comment type="subunit">
    <text evidence="1">Monomer.</text>
</comment>
<comment type="subcellular location">
    <subcellularLocation>
        <location evidence="1">Cytoplasm</location>
    </subcellularLocation>
</comment>
<comment type="similarity">
    <text evidence="1">Belongs to the class-I aminoacyl-tRNA synthetase family.</text>
</comment>
<comment type="sequence caution" evidence="2">
    <conflict type="erroneous initiation">
        <sequence resource="EMBL-CDS" id="AAM38753"/>
    </conflict>
</comment>
<gene>
    <name evidence="1" type="primary">argS</name>
    <name type="ordered locus">XAC3916</name>
</gene>
<feature type="chain" id="PRO_0000151637" description="Arginine--tRNA ligase">
    <location>
        <begin position="1"/>
        <end position="562"/>
    </location>
</feature>
<feature type="short sequence motif" description="'HIGH' region">
    <location>
        <begin position="129"/>
        <end position="139"/>
    </location>
</feature>
<sequence>MKALLRALIGQGIEALRANGTLPADTLPPDFVVERPKTREHGDFATNAAMLLAKAARSNPRALAQALLAALPASDDVAKVEIAGPGFINFHLAPTAYQREVAHVIKQGHDYGRGLAGNGRSVGVEYVSANPTGPLHVGHGRAAAIGDSLARVLDANGWNVKREFYYNDAGVQIENLALSVQARAQGLTPDSDGWPENGYRGDYIADVANAYLAGDTVDLEGHLVTGTKDPADLESIRRFAVAYLRNEQNHDLAAFRVDFDIYFLESSLYKDGKVEEAVQKLIASGHTYEEGGALWLKSTDFGDDKDRVMRKSDGTYTYFVPDVAYHLTKWQRGYERAITELGADHHGSLTRVRAGLQAMELGIPQGWPEYVLHQMVTVMRGGEEVKLSKRAGSYVTLRDLIEETSADAVRWFLIARKPDSQLTFDIDLARAQSNDNPVFYVQYAHARVCSVLRQAQEKGYKYDQAHGLAELACLDDEHSLAVMLELSRYPEVVEIAGQALEPYQIAQYLRELAHAFHTWYHNSKVLVDAAAERDAKLTLAVATQQVLANGLELLGVSAPEKM</sequence>
<evidence type="ECO:0000255" key="1">
    <source>
        <dbReference type="HAMAP-Rule" id="MF_00123"/>
    </source>
</evidence>
<evidence type="ECO:0000305" key="2"/>
<dbReference type="EC" id="6.1.1.19" evidence="1"/>
<dbReference type="EMBL" id="AE008923">
    <property type="protein sequence ID" value="AAM38753.1"/>
    <property type="status" value="ALT_INIT"/>
    <property type="molecule type" value="Genomic_DNA"/>
</dbReference>
<dbReference type="RefSeq" id="WP_003489099.1">
    <property type="nucleotide sequence ID" value="NC_003919.1"/>
</dbReference>
<dbReference type="SMR" id="Q8PFR2"/>
<dbReference type="KEGG" id="xac:XAC3916"/>
<dbReference type="eggNOG" id="COG0018">
    <property type="taxonomic scope" value="Bacteria"/>
</dbReference>
<dbReference type="HOGENOM" id="CLU_006406_0_1_6"/>
<dbReference type="Proteomes" id="UP000000576">
    <property type="component" value="Chromosome"/>
</dbReference>
<dbReference type="GO" id="GO:0005737">
    <property type="term" value="C:cytoplasm"/>
    <property type="evidence" value="ECO:0007669"/>
    <property type="project" value="UniProtKB-SubCell"/>
</dbReference>
<dbReference type="GO" id="GO:0004814">
    <property type="term" value="F:arginine-tRNA ligase activity"/>
    <property type="evidence" value="ECO:0007669"/>
    <property type="project" value="UniProtKB-UniRule"/>
</dbReference>
<dbReference type="GO" id="GO:0005524">
    <property type="term" value="F:ATP binding"/>
    <property type="evidence" value="ECO:0007669"/>
    <property type="project" value="UniProtKB-UniRule"/>
</dbReference>
<dbReference type="GO" id="GO:0006420">
    <property type="term" value="P:arginyl-tRNA aminoacylation"/>
    <property type="evidence" value="ECO:0007669"/>
    <property type="project" value="UniProtKB-UniRule"/>
</dbReference>
<dbReference type="CDD" id="cd00671">
    <property type="entry name" value="ArgRS_core"/>
    <property type="match status" value="1"/>
</dbReference>
<dbReference type="FunFam" id="1.10.730.10:FF:000008">
    <property type="entry name" value="Arginine--tRNA ligase"/>
    <property type="match status" value="1"/>
</dbReference>
<dbReference type="FunFam" id="3.30.1360.70:FF:000003">
    <property type="entry name" value="Arginine--tRNA ligase"/>
    <property type="match status" value="1"/>
</dbReference>
<dbReference type="FunFam" id="3.40.50.620:FF:000062">
    <property type="entry name" value="Arginine--tRNA ligase"/>
    <property type="match status" value="1"/>
</dbReference>
<dbReference type="Gene3D" id="3.30.1360.70">
    <property type="entry name" value="Arginyl tRNA synthetase N-terminal domain"/>
    <property type="match status" value="1"/>
</dbReference>
<dbReference type="Gene3D" id="3.40.50.620">
    <property type="entry name" value="HUPs"/>
    <property type="match status" value="1"/>
</dbReference>
<dbReference type="Gene3D" id="1.10.730.10">
    <property type="entry name" value="Isoleucyl-tRNA Synthetase, Domain 1"/>
    <property type="match status" value="1"/>
</dbReference>
<dbReference type="HAMAP" id="MF_00123">
    <property type="entry name" value="Arg_tRNA_synth"/>
    <property type="match status" value="1"/>
</dbReference>
<dbReference type="InterPro" id="IPR001412">
    <property type="entry name" value="aa-tRNA-synth_I_CS"/>
</dbReference>
<dbReference type="InterPro" id="IPR001278">
    <property type="entry name" value="Arg-tRNA-ligase"/>
</dbReference>
<dbReference type="InterPro" id="IPR005148">
    <property type="entry name" value="Arg-tRNA-synth_N"/>
</dbReference>
<dbReference type="InterPro" id="IPR036695">
    <property type="entry name" value="Arg-tRNA-synth_N_sf"/>
</dbReference>
<dbReference type="InterPro" id="IPR035684">
    <property type="entry name" value="ArgRS_core"/>
</dbReference>
<dbReference type="InterPro" id="IPR008909">
    <property type="entry name" value="DALR_anticod-bd"/>
</dbReference>
<dbReference type="InterPro" id="IPR014729">
    <property type="entry name" value="Rossmann-like_a/b/a_fold"/>
</dbReference>
<dbReference type="InterPro" id="IPR009080">
    <property type="entry name" value="tRNAsynth_Ia_anticodon-bd"/>
</dbReference>
<dbReference type="NCBIfam" id="TIGR00456">
    <property type="entry name" value="argS"/>
    <property type="match status" value="1"/>
</dbReference>
<dbReference type="PANTHER" id="PTHR11956:SF5">
    <property type="entry name" value="ARGININE--TRNA LIGASE, CYTOPLASMIC"/>
    <property type="match status" value="1"/>
</dbReference>
<dbReference type="PANTHER" id="PTHR11956">
    <property type="entry name" value="ARGINYL-TRNA SYNTHETASE"/>
    <property type="match status" value="1"/>
</dbReference>
<dbReference type="Pfam" id="PF03485">
    <property type="entry name" value="Arg_tRNA_synt_N"/>
    <property type="match status" value="1"/>
</dbReference>
<dbReference type="Pfam" id="PF05746">
    <property type="entry name" value="DALR_1"/>
    <property type="match status" value="1"/>
</dbReference>
<dbReference type="Pfam" id="PF00750">
    <property type="entry name" value="tRNA-synt_1d"/>
    <property type="match status" value="1"/>
</dbReference>
<dbReference type="PRINTS" id="PR01038">
    <property type="entry name" value="TRNASYNTHARG"/>
</dbReference>
<dbReference type="SMART" id="SM01016">
    <property type="entry name" value="Arg_tRNA_synt_N"/>
    <property type="match status" value="1"/>
</dbReference>
<dbReference type="SMART" id="SM00836">
    <property type="entry name" value="DALR_1"/>
    <property type="match status" value="1"/>
</dbReference>
<dbReference type="SUPFAM" id="SSF47323">
    <property type="entry name" value="Anticodon-binding domain of a subclass of class I aminoacyl-tRNA synthetases"/>
    <property type="match status" value="1"/>
</dbReference>
<dbReference type="SUPFAM" id="SSF55190">
    <property type="entry name" value="Arginyl-tRNA synthetase (ArgRS), N-terminal 'additional' domain"/>
    <property type="match status" value="1"/>
</dbReference>
<dbReference type="SUPFAM" id="SSF52374">
    <property type="entry name" value="Nucleotidylyl transferase"/>
    <property type="match status" value="1"/>
</dbReference>
<dbReference type="PROSITE" id="PS00178">
    <property type="entry name" value="AA_TRNA_LIGASE_I"/>
    <property type="match status" value="1"/>
</dbReference>
<protein>
    <recommendedName>
        <fullName evidence="1">Arginine--tRNA ligase</fullName>
        <ecNumber evidence="1">6.1.1.19</ecNumber>
    </recommendedName>
    <alternativeName>
        <fullName evidence="1">Arginyl-tRNA synthetase</fullName>
        <shortName evidence="1">ArgRS</shortName>
    </alternativeName>
</protein>
<organism>
    <name type="scientific">Xanthomonas axonopodis pv. citri (strain 306)</name>
    <dbReference type="NCBI Taxonomy" id="190486"/>
    <lineage>
        <taxon>Bacteria</taxon>
        <taxon>Pseudomonadati</taxon>
        <taxon>Pseudomonadota</taxon>
        <taxon>Gammaproteobacteria</taxon>
        <taxon>Lysobacterales</taxon>
        <taxon>Lysobacteraceae</taxon>
        <taxon>Xanthomonas</taxon>
    </lineage>
</organism>
<proteinExistence type="inferred from homology"/>